<accession>Q8UVX0</accession>
<accession>Q7ZWB5</accession>
<name>PIWL1_DANRE</name>
<sequence length="858" mass="97451">MTGRARARSRGRGRGQEPAAPGAQPPVSQEAAKPVVSTPSEGQLVGRGRQKPAPGAMSEEAMLQISAGFQQVKIGERGGRRRDFHDSGVHTRQLMEHVKESKTGVSGTAIELRANFMRLLSRPMWALYQYHVDYKPPMESRRLRSALLFQHEETLGKAHTFDGAILFLPNKLRNAETVLCSETRNGEKVEITVTLTNELPPSSPVCLQFYNILFRRILRILNMQQIGRHYYNPDDPFNIPQHRLTIWPGFMTTILQYESSIMLCSDVSHKVLRSETVLDFMYSLRQQCGDQRFPEACTKELVGLIILTKYNNKTYRIDDIAWDHTPNNTFKKGDTEISFKNYFKSQYGLDITDGNQVLLVSHVKRLGPSGRPPPGPAMLVPEFCYLTGLTDKMRADFNIMKDLASHTRLSPEQREGRINRLISNINRNGDVQNELTTWGLSFENKLLSLNGRVLPSERIIQGGRAFEYNPWTADWSKEMRGLPLISCMSLDNWLMFYTRRNADVAQSLLQTLNKVSGPMGIRMQRAVMIEYEDRQESLLRALQQNVARETQMVVVILPTNRKDKYDCVKKYLCVDCPTPSQCVVSRTISKPQALMTVATKIALQMNCKMGGELWSVEIPLRQLMIVGIDCYHDTAAGKRSIGAMVASLNQGMSRWFSKCVLQNRGQEIIDALKGSLQGALKAYLKYNNSLPSRIIVYRDGVGDGMLQSVVDYEVPQIMQSIKTMGQDYEPKLSVVVVKKRISSRFFARIDGKIANPPPGTVIDTEVTRPEWYDFFIVSQAVRFGCVAPTHYNVVFDNSGLKPDHMQRLTYKLCHMYYNWQGIVRVPAPCQYAHKLAFLVGQSIHKEPNMNLDDFLYYL</sequence>
<organism evidence="12">
    <name type="scientific">Danio rerio</name>
    <name type="common">Zebrafish</name>
    <name type="synonym">Brachydanio rerio</name>
    <dbReference type="NCBI Taxonomy" id="7955"/>
    <lineage>
        <taxon>Eukaryota</taxon>
        <taxon>Metazoa</taxon>
        <taxon>Chordata</taxon>
        <taxon>Craniata</taxon>
        <taxon>Vertebrata</taxon>
        <taxon>Euteleostomi</taxon>
        <taxon>Actinopterygii</taxon>
        <taxon>Neopterygii</taxon>
        <taxon>Teleostei</taxon>
        <taxon>Ostariophysi</taxon>
        <taxon>Cypriniformes</taxon>
        <taxon>Danionidae</taxon>
        <taxon>Danioninae</taxon>
        <taxon>Danio</taxon>
    </lineage>
</organism>
<proteinExistence type="evidence at protein level"/>
<evidence type="ECO:0000250" key="1">
    <source>
        <dbReference type="UniProtKB" id="A8D8P8"/>
    </source>
</evidence>
<evidence type="ECO:0000250" key="2">
    <source>
        <dbReference type="UniProtKB" id="Q9JMB7"/>
    </source>
</evidence>
<evidence type="ECO:0000255" key="3">
    <source>
        <dbReference type="PROSITE-ProRule" id="PRU00142"/>
    </source>
</evidence>
<evidence type="ECO:0000255" key="4">
    <source>
        <dbReference type="PROSITE-ProRule" id="PRU00150"/>
    </source>
</evidence>
<evidence type="ECO:0000256" key="5">
    <source>
        <dbReference type="SAM" id="MobiDB-lite"/>
    </source>
</evidence>
<evidence type="ECO:0000269" key="6">
    <source>
    </source>
</evidence>
<evidence type="ECO:0000269" key="7">
    <source>
    </source>
</evidence>
<evidence type="ECO:0000269" key="8">
    <source>
    </source>
</evidence>
<evidence type="ECO:0000303" key="9">
    <source>
    </source>
</evidence>
<evidence type="ECO:0000303" key="10">
    <source ref="2"/>
</evidence>
<evidence type="ECO:0000305" key="11"/>
<evidence type="ECO:0000312" key="12">
    <source>
        <dbReference type="EMBL" id="AAL57170.1"/>
    </source>
</evidence>
<reference evidence="11" key="1">
    <citation type="journal article" date="2002" name="Mech. Dev.">
        <title>Ziwi, the zebrafish homologue of the Drosophila piwi: co-localization with vasa at the embryonic genital ridge and gonad-specific expression in the adults.</title>
        <authorList>
            <person name="Tan C.H."/>
            <person name="Lee T.C."/>
            <person name="Weeraratne S.D."/>
            <person name="Korzh V."/>
            <person name="Lim T.M."/>
            <person name="Gong Z."/>
        </authorList>
    </citation>
    <scope>NUCLEOTIDE SEQUENCE [MRNA] (ISOFORM 1)</scope>
    <scope>FUNCTION</scope>
    <scope>TISSUE SPECIFICITY</scope>
    <scope>DEVELOPMENTAL STAGE</scope>
    <source>
        <tissue evidence="6">Gonad</tissue>
    </source>
</reference>
<reference evidence="11" key="2">
    <citation type="submission" date="2003-03" db="EMBL/GenBank/DDBJ databases">
        <authorList>
            <consortium name="NIH - Zebrafish Gene Collection (ZGC) project"/>
        </authorList>
    </citation>
    <scope>NUCLEOTIDE SEQUENCE [LARGE SCALE MRNA] (ISOFORM 2)</scope>
    <source>
        <strain evidence="11">AB</strain>
    </source>
</reference>
<reference key="3">
    <citation type="journal article" date="2007" name="Cell">
        <title>A role for Piwi and piRNAs in germ cell maintenance and transposon silencing in Zebrafish.</title>
        <authorList>
            <person name="Houwing S."/>
            <person name="Kamminga L.M."/>
            <person name="Berezikov E."/>
            <person name="Cronembold D."/>
            <person name="Girard A."/>
            <person name="van den Elst H."/>
            <person name="Filippov D.V."/>
            <person name="Blaser H."/>
            <person name="Raz E."/>
            <person name="Moens C.B."/>
            <person name="Plasterk R.H.A."/>
            <person name="Hannon G.J."/>
            <person name="Draper B.W."/>
            <person name="Ketting R.F."/>
        </authorList>
    </citation>
    <scope>FUNCTION</scope>
    <scope>SUBCELLULAR LOCATION</scope>
    <scope>TISSUE SPECIFICITY</scope>
    <scope>RNA-BINDING</scope>
    <scope>DISRUPTION PHENOTYPE</scope>
    <scope>MUTAGENESIS OF ASN-687 AND ILE-694</scope>
</reference>
<reference key="4">
    <citation type="journal article" date="2008" name="EMBO J.">
        <title>Zili is required for germ cell differentiation and meiosis in zebrafish.</title>
        <authorList>
            <person name="Houwing S."/>
            <person name="Berezikov E."/>
            <person name="Ketting R.F."/>
        </authorList>
    </citation>
    <scope>FUNCTION</scope>
    <scope>RNA-BINDING</scope>
</reference>
<comment type="function">
    <text evidence="2 6 7 8">Plays a central role during gametogenesis by repressing transposable elements and preventing their mobilization, which is essential for the germline integrity (PubMed:14516689, PubMed:17418787, PubMed:18833190). Acts via the piRNA metabolic process, which mediates the repression of transposable elements during meiosis by forming complexes composed of piRNAs and Piwi proteins and governs the methylation and subsequent repression of transposons (PubMed:14516689, PubMed:17418787, PubMed:18833190). Directly binds methylated piRNAs, a class of 24 to 30 nucleotide RNAs that are generated by a Dicer-independent mechanism and are primarily derived from transposons and other repeated sequence elements (PubMed:14516689, PubMed:17418787, PubMed:18833190). Has a strong preference for piRNAs with a uridine nucleotide at their 5'-end (g1U preference, also named 1U-bias) and binds piRNAs in an opposite direction compared to piwil2/zili (PubMed:14516689, PubMed:17418787, PubMed:18833190). Participates in a piRNA amplification loop with piwil2/zili (PubMed:14516689, PubMed:17418787, PubMed:18833190). Not involved in the piRNA amplification loop, also named ping-pong amplification cycle. Acts as an endoribonuclease that cleaves transposon messenger RNAs (By similarity).</text>
</comment>
<comment type="cofactor">
    <cofactor evidence="2">
        <name>Mg(2+)</name>
        <dbReference type="ChEBI" id="CHEBI:18420"/>
    </cofactor>
</comment>
<comment type="interaction">
    <interactant intactId="EBI-7011759">
        <id>Q8UVX0</id>
    </interactant>
    <interactant intactId="EBI-7011788">
        <id>Q58EK5</id>
        <label>tdrd1</label>
    </interactant>
    <organismsDiffer>false</organismsDiffer>
    <experiments>3</experiments>
</comment>
<comment type="subcellular location">
    <subcellularLocation>
        <location evidence="7">Cytoplasm</location>
    </subcellularLocation>
    <text evidence="7">Component of the meiotic nuage, also named P granule, a germ-cell-specific organelle required to repress transposon activity during meiosis.</text>
</comment>
<comment type="alternative products">
    <event type="alternative splicing"/>
    <isoform>
        <id>Q8UVX0-1</id>
        <name evidence="11">1</name>
        <sequence type="displayed"/>
    </isoform>
    <isoform>
        <id>Q8UVX0-2</id>
        <name evidence="11">2</name>
        <sequence type="described" ref="VSP_050727 VSP_050728"/>
    </isoform>
</comment>
<comment type="tissue specificity">
    <text evidence="6 7">Expressed exclusively in the adult gonads; expression in the ovary weaker than in the testis (at protein level). During neurogenesis and organogenesis, expression is detected in CNS (midbrain and eye) and fin buds. Starting from 24 hours post-fertilization, expression is found in the genital ridge.</text>
</comment>
<comment type="developmental stage">
    <text evidence="6">Initially detected during embryonic segmentation which persists for at least 4 weeks post hatching.</text>
</comment>
<comment type="domain">
    <text evidence="2">The PAZ domain specifically recognizes binds the 2'-O-methylated 3'-end of piRNAs. The MID region is required for recognition of uridine in the first position of piRNAs (g1U preference, also named 1U-bias).</text>
</comment>
<comment type="PTM">
    <text evidence="2">Methylated on arginine residues; required for the interaction with Tudor domain-containing protein and subsequent localization to the meiotic nuage, also named P granule.</text>
</comment>
<comment type="disruption phenotype">
    <text evidence="7">Progressive loss of germ cells due to apoptosis during larval development.</text>
</comment>
<comment type="similarity">
    <text evidence="11">Belongs to the argonaute family. Piwi subfamily.</text>
</comment>
<gene>
    <name type="primary">piwil1</name>
    <name evidence="9" type="synonym">ziwi</name>
</gene>
<protein>
    <recommendedName>
        <fullName>Piwi-like protein 1</fullName>
        <ecNumber evidence="2">3.1.26.-</ecNumber>
    </recommendedName>
</protein>
<dbReference type="EC" id="3.1.26.-" evidence="2"/>
<dbReference type="EMBL" id="AF336369">
    <property type="protein sequence ID" value="AAL57170.1"/>
    <property type="molecule type" value="mRNA"/>
</dbReference>
<dbReference type="EMBL" id="BC049495">
    <property type="protein sequence ID" value="AAH49495.1"/>
    <property type="molecule type" value="mRNA"/>
</dbReference>
<dbReference type="RefSeq" id="NP_899181.1">
    <molecule id="Q8UVX0-1"/>
    <property type="nucleotide sequence ID" value="NM_183338.2"/>
</dbReference>
<dbReference type="SMR" id="Q8UVX0"/>
<dbReference type="FunCoup" id="Q8UVX0">
    <property type="interactions" value="354"/>
</dbReference>
<dbReference type="IntAct" id="Q8UVX0">
    <property type="interactions" value="2"/>
</dbReference>
<dbReference type="MINT" id="Q8UVX0"/>
<dbReference type="STRING" id="7955.ENSDARP00000121147"/>
<dbReference type="PaxDb" id="7955-ENSDARP00000121147"/>
<dbReference type="Ensembl" id="ENSDART00000061115">
    <molecule id="Q8UVX0-1"/>
    <property type="protein sequence ID" value="ENSDARP00000061114"/>
    <property type="gene ID" value="ENSDARG00000041699"/>
</dbReference>
<dbReference type="Ensembl" id="ENSDART00000138019">
    <molecule id="Q8UVX0-1"/>
    <property type="protein sequence ID" value="ENSDARP00000121147"/>
    <property type="gene ID" value="ENSDARG00000041699"/>
</dbReference>
<dbReference type="GeneID" id="368200"/>
<dbReference type="KEGG" id="dre:368200"/>
<dbReference type="AGR" id="ZFIN:ZDB-GENE-030813-2"/>
<dbReference type="CTD" id="9271"/>
<dbReference type="ZFIN" id="ZDB-GENE-030813-2">
    <property type="gene designation" value="piwil1"/>
</dbReference>
<dbReference type="eggNOG" id="KOG1042">
    <property type="taxonomic scope" value="Eukaryota"/>
</dbReference>
<dbReference type="HOGENOM" id="CLU_008813_0_0_1"/>
<dbReference type="InParanoid" id="Q8UVX0"/>
<dbReference type="OMA" id="RRDFHDT"/>
<dbReference type="OrthoDB" id="445936at2759"/>
<dbReference type="PhylomeDB" id="Q8UVX0"/>
<dbReference type="TreeFam" id="TF354206"/>
<dbReference type="CD-CODE" id="DD98A56E">
    <property type="entry name" value="Balbiani body"/>
</dbReference>
<dbReference type="PRO" id="PR:Q8UVX0"/>
<dbReference type="Proteomes" id="UP000000437">
    <property type="component" value="Chromosome 8"/>
</dbReference>
<dbReference type="Bgee" id="ENSDARG00000041699">
    <property type="expression patterns" value="Expressed in testis and 28 other cell types or tissues"/>
</dbReference>
<dbReference type="ExpressionAtlas" id="Q8UVX0">
    <property type="expression patterns" value="baseline and differential"/>
</dbReference>
<dbReference type="GO" id="GO:0005737">
    <property type="term" value="C:cytoplasm"/>
    <property type="evidence" value="ECO:0000314"/>
    <property type="project" value="ZFIN"/>
</dbReference>
<dbReference type="GO" id="GO:0005634">
    <property type="term" value="C:nucleus"/>
    <property type="evidence" value="ECO:0000318"/>
    <property type="project" value="GO_Central"/>
</dbReference>
<dbReference type="GO" id="GO:0043186">
    <property type="term" value="C:P granule"/>
    <property type="evidence" value="ECO:0000314"/>
    <property type="project" value="UniProtKB"/>
</dbReference>
<dbReference type="GO" id="GO:0046872">
    <property type="term" value="F:metal ion binding"/>
    <property type="evidence" value="ECO:0007669"/>
    <property type="project" value="UniProtKB-KW"/>
</dbReference>
<dbReference type="GO" id="GO:0034584">
    <property type="term" value="F:piRNA binding"/>
    <property type="evidence" value="ECO:0000314"/>
    <property type="project" value="UniProtKB"/>
</dbReference>
<dbReference type="GO" id="GO:0004521">
    <property type="term" value="F:RNA endonuclease activity"/>
    <property type="evidence" value="ECO:0000250"/>
    <property type="project" value="UniProtKB"/>
</dbReference>
<dbReference type="GO" id="GO:0009653">
    <property type="term" value="P:anatomical structure morphogenesis"/>
    <property type="evidence" value="ECO:0000314"/>
    <property type="project" value="UniProtKB"/>
</dbReference>
<dbReference type="GO" id="GO:0007276">
    <property type="term" value="P:gamete generation"/>
    <property type="evidence" value="ECO:0000315"/>
    <property type="project" value="UniProtKB"/>
</dbReference>
<dbReference type="GO" id="GO:0007281">
    <property type="term" value="P:germ cell development"/>
    <property type="evidence" value="ECO:0000314"/>
    <property type="project" value="UniProtKB"/>
</dbReference>
<dbReference type="GO" id="GO:0051321">
    <property type="term" value="P:meiotic cell cycle"/>
    <property type="evidence" value="ECO:0007669"/>
    <property type="project" value="UniProtKB-KW"/>
</dbReference>
<dbReference type="GO" id="GO:0034587">
    <property type="term" value="P:piRNA processing"/>
    <property type="evidence" value="ECO:0000314"/>
    <property type="project" value="UniProtKB"/>
</dbReference>
<dbReference type="GO" id="GO:2000765">
    <property type="term" value="P:regulation of cytoplasmic translation"/>
    <property type="evidence" value="ECO:0000250"/>
    <property type="project" value="UniProtKB"/>
</dbReference>
<dbReference type="GO" id="GO:0031047">
    <property type="term" value="P:regulatory ncRNA-mediated gene silencing"/>
    <property type="evidence" value="ECO:0000315"/>
    <property type="project" value="UniProtKB"/>
</dbReference>
<dbReference type="GO" id="GO:0035092">
    <property type="term" value="P:sperm DNA condensation"/>
    <property type="evidence" value="ECO:0000250"/>
    <property type="project" value="UniProtKB"/>
</dbReference>
<dbReference type="GO" id="GO:0007286">
    <property type="term" value="P:spermatid development"/>
    <property type="evidence" value="ECO:0000250"/>
    <property type="project" value="UniProtKB"/>
</dbReference>
<dbReference type="GO" id="GO:0007283">
    <property type="term" value="P:spermatogenesis"/>
    <property type="evidence" value="ECO:0000250"/>
    <property type="project" value="UniProtKB"/>
</dbReference>
<dbReference type="GO" id="GO:0141006">
    <property type="term" value="P:transposable element silencing by piRNA-mediated heterochromatin formation"/>
    <property type="evidence" value="ECO:0000250"/>
    <property type="project" value="UniProtKB"/>
</dbReference>
<dbReference type="CDD" id="cd02845">
    <property type="entry name" value="PAZ_piwi_like"/>
    <property type="match status" value="1"/>
</dbReference>
<dbReference type="CDD" id="cd04658">
    <property type="entry name" value="Piwi_piwi-like_Euk"/>
    <property type="match status" value="1"/>
</dbReference>
<dbReference type="FunFam" id="3.30.420.10:FF:000014">
    <property type="entry name" value="Piwi-like RNA-mediated gene silencing 1"/>
    <property type="match status" value="1"/>
</dbReference>
<dbReference type="FunFam" id="3.40.50.2300:FF:000131">
    <property type="entry name" value="Piwi-like RNA-mediated gene silencing 1"/>
    <property type="match status" value="1"/>
</dbReference>
<dbReference type="FunFam" id="2.170.260.10:FF:000003">
    <property type="entry name" value="Piwi-like RNA-mediated gene silencing 2"/>
    <property type="match status" value="1"/>
</dbReference>
<dbReference type="Gene3D" id="3.40.50.2300">
    <property type="match status" value="1"/>
</dbReference>
<dbReference type="Gene3D" id="2.170.260.10">
    <property type="entry name" value="paz domain"/>
    <property type="match status" value="1"/>
</dbReference>
<dbReference type="Gene3D" id="3.30.420.10">
    <property type="entry name" value="Ribonuclease H-like superfamily/Ribonuclease H"/>
    <property type="match status" value="1"/>
</dbReference>
<dbReference type="InterPro" id="IPR031320">
    <property type="entry name" value="GAGE"/>
</dbReference>
<dbReference type="InterPro" id="IPR003100">
    <property type="entry name" value="PAZ_dom"/>
</dbReference>
<dbReference type="InterPro" id="IPR036085">
    <property type="entry name" value="PAZ_dom_sf"/>
</dbReference>
<dbReference type="InterPro" id="IPR003165">
    <property type="entry name" value="Piwi"/>
</dbReference>
<dbReference type="InterPro" id="IPR012337">
    <property type="entry name" value="RNaseH-like_sf"/>
</dbReference>
<dbReference type="InterPro" id="IPR036397">
    <property type="entry name" value="RNaseH_sf"/>
</dbReference>
<dbReference type="PANTHER" id="PTHR22891">
    <property type="entry name" value="EUKARYOTIC TRANSLATION INITIATION FACTOR 2C"/>
    <property type="match status" value="1"/>
</dbReference>
<dbReference type="Pfam" id="PF05831">
    <property type="entry name" value="GAGE"/>
    <property type="match status" value="1"/>
</dbReference>
<dbReference type="Pfam" id="PF02170">
    <property type="entry name" value="PAZ"/>
    <property type="match status" value="1"/>
</dbReference>
<dbReference type="Pfam" id="PF02171">
    <property type="entry name" value="Piwi"/>
    <property type="match status" value="1"/>
</dbReference>
<dbReference type="Pfam" id="PF23278">
    <property type="entry name" value="Piwi_N"/>
    <property type="match status" value="1"/>
</dbReference>
<dbReference type="SMART" id="SM00949">
    <property type="entry name" value="PAZ"/>
    <property type="match status" value="1"/>
</dbReference>
<dbReference type="SMART" id="SM00950">
    <property type="entry name" value="Piwi"/>
    <property type="match status" value="1"/>
</dbReference>
<dbReference type="SUPFAM" id="SSF101690">
    <property type="entry name" value="PAZ domain"/>
    <property type="match status" value="1"/>
</dbReference>
<dbReference type="SUPFAM" id="SSF53098">
    <property type="entry name" value="Ribonuclease H-like"/>
    <property type="match status" value="1"/>
</dbReference>
<dbReference type="PROSITE" id="PS50821">
    <property type="entry name" value="PAZ"/>
    <property type="match status" value="1"/>
</dbReference>
<dbReference type="PROSITE" id="PS50822">
    <property type="entry name" value="PIWI"/>
    <property type="match status" value="1"/>
</dbReference>
<keyword id="KW-0025">Alternative splicing</keyword>
<keyword id="KW-0963">Cytoplasm</keyword>
<keyword id="KW-0217">Developmental protein</keyword>
<keyword id="KW-0221">Differentiation</keyword>
<keyword id="KW-0255">Endonuclease</keyword>
<keyword id="KW-0378">Hydrolase</keyword>
<keyword id="KW-0460">Magnesium</keyword>
<keyword id="KW-0469">Meiosis</keyword>
<keyword id="KW-0479">Metal-binding</keyword>
<keyword id="KW-0488">Methylation</keyword>
<keyword id="KW-0540">Nuclease</keyword>
<keyword id="KW-1185">Reference proteome</keyword>
<keyword id="KW-0694">RNA-binding</keyword>
<keyword id="KW-0943">RNA-mediated gene silencing</keyword>
<keyword id="KW-0810">Translation regulation</keyword>
<feature type="chain" id="PRO_0000194066" description="Piwi-like protein 1">
    <location>
        <begin position="1"/>
        <end position="858"/>
    </location>
</feature>
<feature type="domain" description="PAZ" evidence="3">
    <location>
        <begin position="276"/>
        <end position="388"/>
    </location>
</feature>
<feature type="domain" description="Piwi" evidence="4">
    <location>
        <begin position="552"/>
        <end position="844"/>
    </location>
</feature>
<feature type="region of interest" description="Disordered" evidence="5">
    <location>
        <begin position="1"/>
        <end position="56"/>
    </location>
</feature>
<feature type="region of interest" description="Required for binding 2'-O-methylated 3'-end of piRNAs" evidence="2">
    <location>
        <begin position="314"/>
        <end position="316"/>
    </location>
</feature>
<feature type="region of interest" description="MID region" evidence="2">
    <location>
        <begin position="476"/>
        <end position="612"/>
    </location>
</feature>
<feature type="compositionally biased region" description="Basic residues" evidence="5">
    <location>
        <begin position="1"/>
        <end position="13"/>
    </location>
</feature>
<feature type="compositionally biased region" description="Low complexity" evidence="5">
    <location>
        <begin position="16"/>
        <end position="26"/>
    </location>
</feature>
<feature type="active site" evidence="1">
    <location>
        <position position="629"/>
    </location>
</feature>
<feature type="active site" evidence="1">
    <location>
        <position position="667"/>
    </location>
</feature>
<feature type="active site" evidence="1">
    <location>
        <position position="699"/>
    </location>
</feature>
<feature type="active site" evidence="1">
    <location>
        <position position="833"/>
    </location>
</feature>
<feature type="site" description="Required for binding 2'-O-methylated 3'-end of piRNAs" evidence="2">
    <location>
        <position position="378"/>
    </location>
</feature>
<feature type="splice variant" id="VSP_050727" description="In isoform 2." evidence="10">
    <original>DITDGNQVLLVSHVKRLGPSGRPP</original>
    <variation>VIIRLLFFVIRCSNLKFLYLEIVN</variation>
    <location>
        <begin position="350"/>
        <end position="373"/>
    </location>
</feature>
<feature type="splice variant" id="VSP_050728" description="In isoform 2." evidence="10">
    <location>
        <begin position="374"/>
        <end position="858"/>
    </location>
</feature>
<feature type="mutagenesis site" description="In hu2410; induces germ cells apoptosis." evidence="7">
    <original>N</original>
    <variation>K</variation>
    <location>
        <position position="687"/>
    </location>
</feature>
<feature type="mutagenesis site" description="In fh222; induces germ cells apoptosis." evidence="7">
    <original>I</original>
    <variation>N</variation>
    <location>
        <position position="694"/>
    </location>
</feature>
<feature type="sequence conflict" description="In Ref. 2; AAH49495." evidence="11" ref="2">
    <original>W</original>
    <variation>R</variation>
    <location>
        <position position="322"/>
    </location>
</feature>